<reference key="1">
    <citation type="submission" date="1999-11" db="EMBL/GenBank/DDBJ databases">
        <authorList>
            <person name="Stanhope M.J."/>
            <person name="Madsen O.J."/>
            <person name="Waddell V.G."/>
            <person name="Cleven G.C."/>
            <person name="de Jong W.W."/>
            <person name="Springer M.S."/>
            <person name="Madsen O.O.M."/>
        </authorList>
    </citation>
    <scope>NUCLEOTIDE SEQUENCE [GENOMIC DNA]</scope>
</reference>
<dbReference type="EMBL" id="Y16189">
    <property type="protein sequence ID" value="CAA76115.1"/>
    <property type="molecule type" value="Genomic_DNA"/>
</dbReference>
<dbReference type="EMBL" id="Y15946">
    <property type="protein sequence ID" value="CAA75899.2"/>
    <property type="molecule type" value="Genomic_DNA"/>
</dbReference>
<dbReference type="SMR" id="O77830"/>
<dbReference type="FunCoup" id="O77830">
    <property type="interactions" value="203"/>
</dbReference>
<dbReference type="STRING" id="9986.ENSOCUP00000019310"/>
<dbReference type="BindingDB" id="O77830"/>
<dbReference type="PaxDb" id="9986-ENSOCUP00000019310"/>
<dbReference type="eggNOG" id="KOG3656">
    <property type="taxonomic scope" value="Eukaryota"/>
</dbReference>
<dbReference type="InParanoid" id="O77830"/>
<dbReference type="Proteomes" id="UP000001811">
    <property type="component" value="Unplaced"/>
</dbReference>
<dbReference type="GO" id="GO:0009986">
    <property type="term" value="C:cell surface"/>
    <property type="evidence" value="ECO:0000250"/>
    <property type="project" value="UniProtKB"/>
</dbReference>
<dbReference type="GO" id="GO:0005886">
    <property type="term" value="C:plasma membrane"/>
    <property type="evidence" value="ECO:0007669"/>
    <property type="project" value="UniProtKB-SubCell"/>
</dbReference>
<dbReference type="GO" id="GO:0004938">
    <property type="term" value="F:alpha2-adrenergic receptor activity"/>
    <property type="evidence" value="ECO:0007669"/>
    <property type="project" value="InterPro"/>
</dbReference>
<dbReference type="GO" id="GO:0051379">
    <property type="term" value="F:epinephrine binding"/>
    <property type="evidence" value="ECO:0007669"/>
    <property type="project" value="TreeGrafter"/>
</dbReference>
<dbReference type="GO" id="GO:0030168">
    <property type="term" value="P:platelet activation"/>
    <property type="evidence" value="ECO:0007669"/>
    <property type="project" value="InterPro"/>
</dbReference>
<dbReference type="GO" id="GO:0006940">
    <property type="term" value="P:regulation of smooth muscle contraction"/>
    <property type="evidence" value="ECO:0007669"/>
    <property type="project" value="InterPro"/>
</dbReference>
<dbReference type="GO" id="GO:0019229">
    <property type="term" value="P:regulation of vasoconstriction"/>
    <property type="evidence" value="ECO:0007669"/>
    <property type="project" value="InterPro"/>
</dbReference>
<dbReference type="CDD" id="cd15321">
    <property type="entry name" value="7tmA_alpha2B_AR"/>
    <property type="match status" value="1"/>
</dbReference>
<dbReference type="FunFam" id="1.20.1070.10:FF:000330">
    <property type="entry name" value="Alpha 2B adrenergic receptor"/>
    <property type="match status" value="1"/>
</dbReference>
<dbReference type="FunFam" id="1.20.1070.10:FF:000185">
    <property type="entry name" value="Alpha-2B adrenergic receptor"/>
    <property type="match status" value="1"/>
</dbReference>
<dbReference type="Gene3D" id="1.20.1070.10">
    <property type="entry name" value="Rhodopsin 7-helix transmembrane proteins"/>
    <property type="match status" value="2"/>
</dbReference>
<dbReference type="InterPro" id="IPR002233">
    <property type="entry name" value="ADR_fam"/>
</dbReference>
<dbReference type="InterPro" id="IPR000207">
    <property type="entry name" value="ADRA2B_rcpt"/>
</dbReference>
<dbReference type="InterPro" id="IPR000276">
    <property type="entry name" value="GPCR_Rhodpsn"/>
</dbReference>
<dbReference type="InterPro" id="IPR017452">
    <property type="entry name" value="GPCR_Rhodpsn_7TM"/>
</dbReference>
<dbReference type="PANTHER" id="PTHR24248">
    <property type="entry name" value="ADRENERGIC RECEPTOR-RELATED G-PROTEIN COUPLED RECEPTOR"/>
    <property type="match status" value="1"/>
</dbReference>
<dbReference type="PANTHER" id="PTHR24248:SF130">
    <property type="entry name" value="ALPHA-2B ADRENERGIC RECEPTOR"/>
    <property type="match status" value="1"/>
</dbReference>
<dbReference type="Pfam" id="PF00001">
    <property type="entry name" value="7tm_1"/>
    <property type="match status" value="1"/>
</dbReference>
<dbReference type="PRINTS" id="PR01103">
    <property type="entry name" value="ADRENERGICR"/>
</dbReference>
<dbReference type="PRINTS" id="PR00559">
    <property type="entry name" value="ADRENRGCA2BR"/>
</dbReference>
<dbReference type="PRINTS" id="PR00237">
    <property type="entry name" value="GPCRRHODOPSN"/>
</dbReference>
<dbReference type="SUPFAM" id="SSF81321">
    <property type="entry name" value="Family A G protein-coupled receptor-like"/>
    <property type="match status" value="1"/>
</dbReference>
<dbReference type="PROSITE" id="PS00237">
    <property type="entry name" value="G_PROTEIN_RECEP_F1_1"/>
    <property type="match status" value="1"/>
</dbReference>
<dbReference type="PROSITE" id="PS50262">
    <property type="entry name" value="G_PROTEIN_RECEP_F1_2"/>
    <property type="match status" value="1"/>
</dbReference>
<comment type="function">
    <text>Alpha-2 adrenergic receptors mediate the catecholamine-induced inhibition of adenylate cyclase through the action of G proteins.</text>
</comment>
<comment type="subunit">
    <text evidence="2">Interacts with RAB26. Interacts with PPP1R9B. Interacts with GGA1, GGA2 and GGA3.</text>
</comment>
<comment type="subcellular location">
    <subcellularLocation>
        <location evidence="2">Cell membrane</location>
        <topology evidence="2">Multi-pass membrane protein</topology>
    </subcellularLocation>
    <text evidence="2">Interaction with RAB26, GGA1, GGA2 and GGA3 mediates transport from the Golgi to the cell membrane.</text>
</comment>
<comment type="similarity">
    <text evidence="3">Belongs to the G-protein coupled receptor 1 family. Adrenergic receptor subfamily. ADRA2B sub-subfamily.</text>
</comment>
<feature type="chain" id="PRO_0000069099" description="Alpha-2B adrenergic receptor">
    <location>
        <begin position="1" status="less than"/>
        <end position="394" status="greater than"/>
    </location>
</feature>
<feature type="transmembrane region" description="Helical; Name=1" evidence="1">
    <location>
        <begin position="1" status="less than"/>
        <end position="25"/>
    </location>
</feature>
<feature type="topological domain" description="Cytoplasmic" evidence="1">
    <location>
        <begin position="26"/>
        <end position="36"/>
    </location>
</feature>
<feature type="transmembrane region" description="Helical; Name=2" evidence="1">
    <location>
        <begin position="37"/>
        <end position="62"/>
    </location>
</feature>
<feature type="topological domain" description="Extracellular" evidence="1">
    <location>
        <begin position="63"/>
        <end position="72"/>
    </location>
</feature>
<feature type="transmembrane region" description="Helical; Name=3" evidence="1">
    <location>
        <begin position="73"/>
        <end position="95"/>
    </location>
</feature>
<feature type="topological domain" description="Cytoplasmic" evidence="1">
    <location>
        <begin position="96"/>
        <end position="117"/>
    </location>
</feature>
<feature type="transmembrane region" description="Helical; Name=4" evidence="1">
    <location>
        <begin position="118"/>
        <end position="140"/>
    </location>
</feature>
<feature type="topological domain" description="Extracellular" evidence="1">
    <location>
        <begin position="141"/>
        <end position="156"/>
    </location>
</feature>
<feature type="transmembrane region" description="Helical; Name=5" evidence="1">
    <location>
        <begin position="157"/>
        <end position="180"/>
    </location>
</feature>
<feature type="topological domain" description="Cytoplasmic" evidence="1">
    <location>
        <begin position="181"/>
        <end position="358"/>
    </location>
</feature>
<feature type="transmembrane region" description="Helical; Name=6" evidence="1">
    <location>
        <begin position="359"/>
        <end position="382"/>
    </location>
</feature>
<feature type="topological domain" description="Extracellular" evidence="1">
    <location>
        <begin position="383"/>
        <end position="391"/>
    </location>
</feature>
<feature type="transmembrane region" description="Helical; Name=7" evidence="1">
    <location>
        <begin position="392"/>
        <end position="394" status="greater than"/>
    </location>
</feature>
<feature type="region of interest" description="Disordered" evidence="4">
    <location>
        <begin position="191"/>
        <end position="318"/>
    </location>
</feature>
<feature type="compositionally biased region" description="Acidic residues" evidence="4">
    <location>
        <begin position="281"/>
        <end position="298"/>
    </location>
</feature>
<feature type="compositionally biased region" description="Low complexity" evidence="4">
    <location>
        <begin position="299"/>
        <end position="312"/>
    </location>
</feature>
<feature type="disulfide bond" evidence="3">
    <location>
        <begin position="72"/>
        <end position="151"/>
    </location>
</feature>
<feature type="non-terminal residue">
    <location>
        <position position="1"/>
    </location>
</feature>
<feature type="non-terminal residue">
    <location>
        <position position="394"/>
    </location>
</feature>
<organism>
    <name type="scientific">Oryctolagus cuniculus</name>
    <name type="common">Rabbit</name>
    <dbReference type="NCBI Taxonomy" id="9986"/>
    <lineage>
        <taxon>Eukaryota</taxon>
        <taxon>Metazoa</taxon>
        <taxon>Chordata</taxon>
        <taxon>Craniata</taxon>
        <taxon>Vertebrata</taxon>
        <taxon>Euteleostomi</taxon>
        <taxon>Mammalia</taxon>
        <taxon>Eutheria</taxon>
        <taxon>Euarchontoglires</taxon>
        <taxon>Glires</taxon>
        <taxon>Lagomorpha</taxon>
        <taxon>Leporidae</taxon>
        <taxon>Oryctolagus</taxon>
    </lineage>
</organism>
<keyword id="KW-1003">Cell membrane</keyword>
<keyword id="KW-1015">Disulfide bond</keyword>
<keyword id="KW-0297">G-protein coupled receptor</keyword>
<keyword id="KW-0472">Membrane</keyword>
<keyword id="KW-0675">Receptor</keyword>
<keyword id="KW-1185">Reference proteome</keyword>
<keyword id="KW-0807">Transducer</keyword>
<keyword id="KW-0812">Transmembrane</keyword>
<keyword id="KW-1133">Transmembrane helix</keyword>
<name>ADA2B_RABIT</name>
<accession>O77830</accession>
<sequence>AIAAVITFLILFTIFGNALVILAVLTSRSLRAPQNLFLVSLAAADILVATLIIPFSLANELLGYWYFRRTWCEVYLALDVLFCTSSIVHLCAISLDRYWAVSRALEYNCKRTPRRIKCIILTVWLIAAAISLPPLIYKGDQGPQPHGAPQCKLNQEAWYILSSSLGSFFVPCLIMILVYLRIYLIAKRSHRRGPRAKGGPGEGESRQACPVPGGPSASAKLPTLATPVASASEANGPSKPAGEKEEGETPEDPGTQALPPGWATLPNSGQGQKEGVSGASLEEEAEEEEEEEEEEDEPQAVPVSPASVGSPPLQQPQGSRVLATLRGQVLVGRGVGAMSGQWWRRRAQLSREKRFTFVLAVVIGVFVLCWFPFFFSYSLSAICPQQCRVPHGLF</sequence>
<protein>
    <recommendedName>
        <fullName>Alpha-2B adrenergic receptor</fullName>
    </recommendedName>
    <alternativeName>
        <fullName>Alpha-2B adrenoreceptor</fullName>
        <shortName>Alpha-2B adrenoceptor</shortName>
        <shortName>Alpha-2BAR</shortName>
    </alternativeName>
</protein>
<proteinExistence type="inferred from homology"/>
<evidence type="ECO:0000250" key="1"/>
<evidence type="ECO:0000250" key="2">
    <source>
        <dbReference type="UniProtKB" id="P18089"/>
    </source>
</evidence>
<evidence type="ECO:0000255" key="3">
    <source>
        <dbReference type="PROSITE-ProRule" id="PRU00521"/>
    </source>
</evidence>
<evidence type="ECO:0000256" key="4">
    <source>
        <dbReference type="SAM" id="MobiDB-lite"/>
    </source>
</evidence>
<gene>
    <name type="primary">ADRA2B</name>
</gene>